<dbReference type="EMBL" id="AK122246">
    <property type="protein sequence ID" value="BAC65528.1"/>
    <property type="status" value="ALT_INIT"/>
    <property type="molecule type" value="mRNA"/>
</dbReference>
<dbReference type="EMBL" id="AL589699">
    <property type="protein sequence ID" value="CAI26085.1"/>
    <property type="molecule type" value="Genomic_DNA"/>
</dbReference>
<dbReference type="EMBL" id="BC115723">
    <property type="protein sequence ID" value="AAI15724.1"/>
    <property type="molecule type" value="mRNA"/>
</dbReference>
<dbReference type="EMBL" id="BC115940">
    <property type="protein sequence ID" value="AAI15941.1"/>
    <property type="molecule type" value="mRNA"/>
</dbReference>
<dbReference type="CCDS" id="CCDS36624.1"/>
<dbReference type="RefSeq" id="NP_001074520.1">
    <property type="nucleotide sequence ID" value="NM_001081051.2"/>
</dbReference>
<dbReference type="SMR" id="Q5SZV5"/>
<dbReference type="BioGRID" id="229131">
    <property type="interactions" value="1"/>
</dbReference>
<dbReference type="FunCoup" id="Q5SZV5">
    <property type="interactions" value="1197"/>
</dbReference>
<dbReference type="IntAct" id="Q5SZV5">
    <property type="interactions" value="1"/>
</dbReference>
<dbReference type="STRING" id="10090.ENSMUSP00000006893"/>
<dbReference type="GlyConnect" id="2268">
    <property type="glycosylation" value="2 N-Linked glycans (1 site)"/>
</dbReference>
<dbReference type="GlyCosmos" id="Q5SZV5">
    <property type="glycosylation" value="10 sites, 2 glycans"/>
</dbReference>
<dbReference type="GlyGen" id="Q5SZV5">
    <property type="glycosylation" value="12 sites, 7 N-linked glycans (5 sites)"/>
</dbReference>
<dbReference type="iPTMnet" id="Q5SZV5"/>
<dbReference type="PhosphoSitePlus" id="Q5SZV5"/>
<dbReference type="jPOST" id="Q5SZV5"/>
<dbReference type="PaxDb" id="10090-ENSMUSP00000006893"/>
<dbReference type="ProteomicsDB" id="269038"/>
<dbReference type="Antibodypedia" id="2465">
    <property type="antibodies" value="120 antibodies from 26 providers"/>
</dbReference>
<dbReference type="Ensembl" id="ENSMUST00000006893.9">
    <property type="protein sequence ID" value="ENSMUSP00000006893.9"/>
    <property type="gene ID" value="ENSMUSG00000006711.16"/>
</dbReference>
<dbReference type="GeneID" id="210108"/>
<dbReference type="KEGG" id="mmu:210108"/>
<dbReference type="UCSC" id="uc007pwn.1">
    <property type="organism name" value="mouse"/>
</dbReference>
<dbReference type="AGR" id="MGI:3036268"/>
<dbReference type="MGI" id="MGI:3036268">
    <property type="gene designation" value="D130043K22Rik"/>
</dbReference>
<dbReference type="VEuPathDB" id="HostDB:ENSMUSG00000006711"/>
<dbReference type="eggNOG" id="ENOG502QR8M">
    <property type="taxonomic scope" value="Eukaryota"/>
</dbReference>
<dbReference type="GeneTree" id="ENSGT00940000161462"/>
<dbReference type="HOGENOM" id="CLU_009448_0_1_1"/>
<dbReference type="InParanoid" id="Q5SZV5"/>
<dbReference type="OMA" id="AFWMENL"/>
<dbReference type="OrthoDB" id="536372at2759"/>
<dbReference type="PhylomeDB" id="Q5SZV5"/>
<dbReference type="TreeFam" id="TF323356"/>
<dbReference type="Reactome" id="R-MMU-8856825">
    <property type="pathway name" value="Cargo recognition for clathrin-mediated endocytosis"/>
</dbReference>
<dbReference type="Reactome" id="R-MMU-8856828">
    <property type="pathway name" value="Clathrin-mediated endocytosis"/>
</dbReference>
<dbReference type="BioGRID-ORCS" id="210108">
    <property type="hits" value="3 hits in 76 CRISPR screens"/>
</dbReference>
<dbReference type="ChiTaRS" id="D130043K22Rik">
    <property type="organism name" value="mouse"/>
</dbReference>
<dbReference type="PRO" id="PR:Q5SZV5"/>
<dbReference type="Proteomes" id="UP000000589">
    <property type="component" value="Chromosome 13"/>
</dbReference>
<dbReference type="RNAct" id="Q5SZV5">
    <property type="molecule type" value="protein"/>
</dbReference>
<dbReference type="Bgee" id="ENSMUSG00000006711">
    <property type="expression patterns" value="Expressed in lumbar dorsal root ganglion and 118 other cell types or tissues"/>
</dbReference>
<dbReference type="ExpressionAtlas" id="Q5SZV5">
    <property type="expression patterns" value="baseline and differential"/>
</dbReference>
<dbReference type="GO" id="GO:0005769">
    <property type="term" value="C:early endosome"/>
    <property type="evidence" value="ECO:0000250"/>
    <property type="project" value="UniProtKB"/>
</dbReference>
<dbReference type="GO" id="GO:0031901">
    <property type="term" value="C:early endosome membrane"/>
    <property type="evidence" value="ECO:0007669"/>
    <property type="project" value="UniProtKB-SubCell"/>
</dbReference>
<dbReference type="GO" id="GO:0005886">
    <property type="term" value="C:plasma membrane"/>
    <property type="evidence" value="ECO:0000250"/>
    <property type="project" value="UniProtKB"/>
</dbReference>
<dbReference type="GO" id="GO:0021954">
    <property type="term" value="P:central nervous system neuron development"/>
    <property type="evidence" value="ECO:0000315"/>
    <property type="project" value="MGI"/>
</dbReference>
<dbReference type="GO" id="GO:0033555">
    <property type="term" value="P:multicellular organismal response to stress"/>
    <property type="evidence" value="ECO:0000315"/>
    <property type="project" value="MGI"/>
</dbReference>
<dbReference type="GO" id="GO:0030517">
    <property type="term" value="P:negative regulation of axon extension"/>
    <property type="evidence" value="ECO:0000266"/>
    <property type="project" value="MGI"/>
</dbReference>
<dbReference type="GO" id="GO:0048692">
    <property type="term" value="P:negative regulation of axon extension involved in regeneration"/>
    <property type="evidence" value="ECO:0000315"/>
    <property type="project" value="MGI"/>
</dbReference>
<dbReference type="GO" id="GO:2000171">
    <property type="term" value="P:negative regulation of dendrite development"/>
    <property type="evidence" value="ECO:0000250"/>
    <property type="project" value="UniProtKB"/>
</dbReference>
<dbReference type="GO" id="GO:0001764">
    <property type="term" value="P:neuron migration"/>
    <property type="evidence" value="ECO:0000250"/>
    <property type="project" value="UniProtKB"/>
</dbReference>
<dbReference type="GO" id="GO:0060391">
    <property type="term" value="P:positive regulation of SMAD protein signal transduction"/>
    <property type="evidence" value="ECO:0000266"/>
    <property type="project" value="MGI"/>
</dbReference>
<dbReference type="GO" id="GO:0010996">
    <property type="term" value="P:response to auditory stimulus"/>
    <property type="evidence" value="ECO:0000315"/>
    <property type="project" value="MGI"/>
</dbReference>
<dbReference type="GO" id="GO:0007605">
    <property type="term" value="P:sensory perception of sound"/>
    <property type="evidence" value="ECO:0000315"/>
    <property type="project" value="MGI"/>
</dbReference>
<dbReference type="GO" id="GO:0021794">
    <property type="term" value="P:thalamus development"/>
    <property type="evidence" value="ECO:0000315"/>
    <property type="project" value="MGI"/>
</dbReference>
<dbReference type="GO" id="GO:0042297">
    <property type="term" value="P:vocal learning"/>
    <property type="evidence" value="ECO:0000315"/>
    <property type="project" value="MGI"/>
</dbReference>
<dbReference type="CDD" id="cd00146">
    <property type="entry name" value="PKD"/>
    <property type="match status" value="4"/>
</dbReference>
<dbReference type="FunFam" id="2.60.40.10:FF:000061">
    <property type="entry name" value="Dyslexia-associated protein KIAA0319 homolog"/>
    <property type="match status" value="2"/>
</dbReference>
<dbReference type="FunFam" id="2.60.40.10:FF:000258">
    <property type="entry name" value="Dyslexia-associated protein KIAA0319 homolog"/>
    <property type="match status" value="1"/>
</dbReference>
<dbReference type="FunFam" id="2.60.40.10:FF:000319">
    <property type="entry name" value="Dyslexia-associated protein KIAA0319 homolog"/>
    <property type="match status" value="1"/>
</dbReference>
<dbReference type="FunFam" id="2.60.40.10:FF:000257">
    <property type="entry name" value="Dyslexia-associated protein KIAA0319-like"/>
    <property type="match status" value="1"/>
</dbReference>
<dbReference type="Gene3D" id="2.60.40.10">
    <property type="entry name" value="Immunoglobulins"/>
    <property type="match status" value="5"/>
</dbReference>
<dbReference type="InterPro" id="IPR013783">
    <property type="entry name" value="Ig-like_fold"/>
</dbReference>
<dbReference type="InterPro" id="IPR029865">
    <property type="entry name" value="KIAA0319-like"/>
</dbReference>
<dbReference type="InterPro" id="IPR056502">
    <property type="entry name" value="KIAA0319-like_C"/>
</dbReference>
<dbReference type="InterPro" id="IPR013980">
    <property type="entry name" value="MANSC_dom"/>
</dbReference>
<dbReference type="InterPro" id="IPR011106">
    <property type="entry name" value="MANSC_N"/>
</dbReference>
<dbReference type="InterPro" id="IPR022409">
    <property type="entry name" value="PKD/Chitinase_dom"/>
</dbReference>
<dbReference type="InterPro" id="IPR000601">
    <property type="entry name" value="PKD_dom"/>
</dbReference>
<dbReference type="InterPro" id="IPR035986">
    <property type="entry name" value="PKD_dom_sf"/>
</dbReference>
<dbReference type="PANTHER" id="PTHR46182:SF1">
    <property type="entry name" value="DYSLEXIA-ASSOCIATED PROTEIN KIAA0319"/>
    <property type="match status" value="1"/>
</dbReference>
<dbReference type="PANTHER" id="PTHR46182">
    <property type="entry name" value="FI19480P1"/>
    <property type="match status" value="1"/>
</dbReference>
<dbReference type="Pfam" id="PF22352">
    <property type="entry name" value="K319L-like_PKD"/>
    <property type="match status" value="5"/>
</dbReference>
<dbReference type="Pfam" id="PF23620">
    <property type="entry name" value="KIAA0319"/>
    <property type="match status" value="1"/>
</dbReference>
<dbReference type="Pfam" id="PF23597">
    <property type="entry name" value="KIAA0319_N"/>
    <property type="match status" value="1"/>
</dbReference>
<dbReference type="SMART" id="SM00765">
    <property type="entry name" value="MANEC"/>
    <property type="match status" value="1"/>
</dbReference>
<dbReference type="SMART" id="SM00089">
    <property type="entry name" value="PKD"/>
    <property type="match status" value="5"/>
</dbReference>
<dbReference type="SUPFAM" id="SSF49299">
    <property type="entry name" value="PKD domain"/>
    <property type="match status" value="4"/>
</dbReference>
<dbReference type="PROSITE" id="PS50986">
    <property type="entry name" value="MANSC"/>
    <property type="match status" value="1"/>
</dbReference>
<dbReference type="PROSITE" id="PS50093">
    <property type="entry name" value="PKD"/>
    <property type="match status" value="2"/>
</dbReference>
<feature type="signal peptide" evidence="3">
    <location>
        <begin position="1"/>
        <end position="22"/>
    </location>
</feature>
<feature type="chain" id="PRO_0000042947" description="Dyslexia-associated protein KIAA0319 homolog">
    <location>
        <begin position="23"/>
        <end position="1081"/>
    </location>
</feature>
<feature type="topological domain" description="Extracellular" evidence="3">
    <location>
        <begin position="23"/>
        <end position="964"/>
    </location>
</feature>
<feature type="transmembrane region" description="Helical" evidence="3">
    <location>
        <begin position="965"/>
        <end position="985"/>
    </location>
</feature>
<feature type="topological domain" description="Cytoplasmic" evidence="3">
    <location>
        <begin position="986"/>
        <end position="1081"/>
    </location>
</feature>
<feature type="domain" description="MANSC" evidence="5">
    <location>
        <begin position="23"/>
        <end position="99"/>
    </location>
</feature>
<feature type="domain" description="PKD 1" evidence="4">
    <location>
        <begin position="345"/>
        <end position="436"/>
    </location>
</feature>
<feature type="domain" description="PKD 2" evidence="4">
    <location>
        <begin position="444"/>
        <end position="533"/>
    </location>
</feature>
<feature type="domain" description="PKD 3" evidence="4">
    <location>
        <begin position="539"/>
        <end position="629"/>
    </location>
</feature>
<feature type="domain" description="PKD 4" evidence="4">
    <location>
        <begin position="630"/>
        <end position="723"/>
    </location>
</feature>
<feature type="domain" description="PKD 5" evidence="4">
    <location>
        <begin position="729"/>
        <end position="820"/>
    </location>
</feature>
<feature type="region of interest" description="Disordered" evidence="6">
    <location>
        <begin position="168"/>
        <end position="331"/>
    </location>
</feature>
<feature type="short sequence motif" description="Endocytosis signal">
    <location>
        <begin position="1004"/>
        <end position="1007"/>
    </location>
</feature>
<feature type="compositionally biased region" description="Polar residues" evidence="6">
    <location>
        <begin position="197"/>
        <end position="206"/>
    </location>
</feature>
<feature type="compositionally biased region" description="Polar residues" evidence="6">
    <location>
        <begin position="222"/>
        <end position="234"/>
    </location>
</feature>
<feature type="compositionally biased region" description="Low complexity" evidence="6">
    <location>
        <begin position="236"/>
        <end position="255"/>
    </location>
</feature>
<feature type="compositionally biased region" description="Polar residues" evidence="6">
    <location>
        <begin position="283"/>
        <end position="307"/>
    </location>
</feature>
<feature type="compositionally biased region" description="Polar residues" evidence="6">
    <location>
        <begin position="314"/>
        <end position="324"/>
    </location>
</feature>
<feature type="modified residue" description="Phosphoserine" evidence="9">
    <location>
        <position position="1009"/>
    </location>
</feature>
<feature type="glycosylation site" description="N-linked (GlcNAc...) asparagine" evidence="3">
    <location>
        <position position="196"/>
    </location>
</feature>
<feature type="glycosylation site" description="N-linked (GlcNAc...) asparagine" evidence="3">
    <location>
        <position position="228"/>
    </location>
</feature>
<feature type="glycosylation site" description="N-linked (GlcNAc...) asparagine" evidence="3">
    <location>
        <position position="272"/>
    </location>
</feature>
<feature type="glycosylation site" description="N-linked (GlcNAc...) asparagine" evidence="3">
    <location>
        <position position="302"/>
    </location>
</feature>
<feature type="glycosylation site" description="N-linked (GlcNAc...) asparagine" evidence="3">
    <location>
        <position position="430"/>
    </location>
</feature>
<feature type="glycosylation site" description="N-linked (GlcNAc...) asparagine" evidence="3">
    <location>
        <position position="507"/>
    </location>
</feature>
<feature type="glycosylation site" description="N-linked (GlcNAc...) asparagine" evidence="3">
    <location>
        <position position="522"/>
    </location>
</feature>
<feature type="glycosylation site" description="N-linked (GlcNAc...) asparagine" evidence="3">
    <location>
        <position position="545"/>
    </location>
</feature>
<feature type="glycosylation site" description="N-linked (GlcNAc...) asparagine" evidence="3">
    <location>
        <position position="560"/>
    </location>
</feature>
<feature type="glycosylation site" description="N-linked (GlcNAc...) asparagine" evidence="3">
    <location>
        <position position="742"/>
    </location>
</feature>
<comment type="function">
    <text evidence="1">Involved in neuronal migration during development of the cerebral neocortex. May function in a cell autonomous and a non-cell autonomous manner and play a role in appropriate adhesion between migrating neurons and radial glial fibers. May also regulate growth and differentiation of dendrites (By similarity).</text>
</comment>
<comment type="subunit">
    <text evidence="1">Homodimer. Interacts with AP2M1; required for clathrin-mediated endocytosis (By similarity).</text>
</comment>
<comment type="subcellular location">
    <subcellularLocation>
        <location evidence="2">Cell membrane</location>
        <topology evidence="2">Single-pass type I membrane protein</topology>
    </subcellularLocation>
    <subcellularLocation>
        <location evidence="2">Early endosome membrane</location>
        <topology evidence="2">Single-pass type I membrane protein</topology>
    </subcellularLocation>
</comment>
<comment type="developmental stage">
    <text evidence="7">Expressed in the frontal neocortex, glanglionic eminence, mesencephalon and cerebellum at 13.5 dpc. More prominently expressed in the developing cerebral neocortex and mesencephalon at 15.5 dpc and in the cortical plate and in the remnant of the ventricular zone at 18.5 dpc.</text>
</comment>
<comment type="PTM">
    <text evidence="1">N-glycosylated.</text>
</comment>
<comment type="PTM">
    <text evidence="1">O-glycosylated.</text>
</comment>
<comment type="PTM">
    <text evidence="1">Shedding of the extracellular domain and intramembrane cleavage produce several proteolytic products. The intramembrane cleavage releases a soluble cytoplasmic polypeptide that translocates to the nucleolus (By similarity).</text>
</comment>
<comment type="sequence caution" evidence="8">
    <conflict type="erroneous initiation">
        <sequence resource="EMBL-CDS" id="BAC65528"/>
    </conflict>
    <text>Extended N-terminus.</text>
</comment>
<protein>
    <recommendedName>
        <fullName>Dyslexia-associated protein KIAA0319 homolog</fullName>
    </recommendedName>
</protein>
<name>K0319_MOUSE</name>
<accession>Q5SZV5</accession>
<accession>Q14BF3</accession>
<accession>Q80U39</accession>
<evidence type="ECO:0000250" key="1"/>
<evidence type="ECO:0000250" key="2">
    <source>
        <dbReference type="UniProtKB" id="Q5VV43"/>
    </source>
</evidence>
<evidence type="ECO:0000255" key="3"/>
<evidence type="ECO:0000255" key="4">
    <source>
        <dbReference type="PROSITE-ProRule" id="PRU00151"/>
    </source>
</evidence>
<evidence type="ECO:0000255" key="5">
    <source>
        <dbReference type="PROSITE-ProRule" id="PRU00341"/>
    </source>
</evidence>
<evidence type="ECO:0000256" key="6">
    <source>
        <dbReference type="SAM" id="MobiDB-lite"/>
    </source>
</evidence>
<evidence type="ECO:0000269" key="7">
    <source>
    </source>
</evidence>
<evidence type="ECO:0000305" key="8"/>
<evidence type="ECO:0007744" key="9">
    <source>
    </source>
</evidence>
<gene>
    <name type="primary">Kiaa0319</name>
</gene>
<sequence>MVSPPGVLSSLLLLAAMAGGSSQQCSEGRTYSDAIISPNPETIRIMRVSQTFSVGDCTAACCDLLTCDLAWWFEGSCYLVKCMRSENCEPRTTGPIRSYLTFVRRPVQRPGQLLDYGDMMLSRGSPSGAWGDSLEDLRKDLPFLGKDGGPEETTEYSDEYKDLERGLLQPSNQQDPRGSAEYPDWSLLPSNEGGFNATATGDNSAASMEKLQDPTPHPLDQEQLQALNESTWSPTPGHSSISSVWPSSASPLPTEEGLEGEETLQLQEQPSNSSGKEVPMPSHNPSPASLESSPATTEKNSNFTVTPRSRKHSTPTFPTSTVLTGLTPPPWPLSPTASRTVKALAVSAGDNLVLTLPDREAELKASVEPAPPADTTYSYEWSLMSHPVDFQGKIKQENKPTLHLSQLSVGLYAFRVAVSSENAFGEGYVNVTVMPAARVNQPPVAVVSPQTQELSVPLTSALIDGSQSTDDTEIVSYHWEEVDGPFLGEEFPADTPILRLSNLVPGNYTFRLTITDSDGATNSTTASLVIRDAVDYPPVANAGPNQTITLPQNTIILNGNQSSDDHQIVLYEWFAGPGGESKEMVMQGAQTPYLHLSELQEGEYTFQLMVTDSSGQQSTALVAVTVQAENNQAPVAVAGPDKELVFPVQSATLDGSRSSDDHGIVCYHWEHIRGPSAVEMENVDKAIATVTGLQVGIYHFRLTVRDQQGLSSTSTLTVAVKKENNSPPRAQAGGRHVLILPNNSITLDGSRSTDDRGIVSYLWIRDGQSPAAGDVIGGSDHRAALQLTNLVEGVYTFHLLVTDSQGASDSDAATVEVLPDPKKDGLVELILQVGVEQLTEQQKETLVRQLAVLLNVLDSDVKVLKIQAHTDVSTVIVFYVQSGSPFKVLRAAAVARNLHKRLSKEKEAFLLFKVLRVDTAGCLLKCSGHGHCDPITKRCICSQLWMENLIQRYMWDGESNCEWSVFYVAALALTLTLLTGAVSWLCICCCRRRKRTKIRKKTKYTILDSMDEQERMELRPKYGIKHRSTEHNSSLMVSESEFESDQDTLFSRERMERGVLKGSLNGCARNGVSFGYYSKDR</sequence>
<proteinExistence type="evidence at protein level"/>
<organism>
    <name type="scientific">Mus musculus</name>
    <name type="common">Mouse</name>
    <dbReference type="NCBI Taxonomy" id="10090"/>
    <lineage>
        <taxon>Eukaryota</taxon>
        <taxon>Metazoa</taxon>
        <taxon>Chordata</taxon>
        <taxon>Craniata</taxon>
        <taxon>Vertebrata</taxon>
        <taxon>Euteleostomi</taxon>
        <taxon>Mammalia</taxon>
        <taxon>Eutheria</taxon>
        <taxon>Euarchontoglires</taxon>
        <taxon>Glires</taxon>
        <taxon>Rodentia</taxon>
        <taxon>Myomorpha</taxon>
        <taxon>Muroidea</taxon>
        <taxon>Muridae</taxon>
        <taxon>Murinae</taxon>
        <taxon>Mus</taxon>
        <taxon>Mus</taxon>
    </lineage>
</organism>
<reference key="1">
    <citation type="journal article" date="2003" name="DNA Res.">
        <title>Prediction of the coding sequences of mouse homologues of KIAA gene: II. The complete nucleotide sequences of 400 mouse KIAA-homologous cDNAs identified by screening of terminal sequences of cDNA clones randomly sampled from size-fractionated libraries.</title>
        <authorList>
            <person name="Okazaki N."/>
            <person name="Kikuno R."/>
            <person name="Ohara R."/>
            <person name="Inamoto S."/>
            <person name="Aizawa H."/>
            <person name="Yuasa S."/>
            <person name="Nakajima D."/>
            <person name="Nagase T."/>
            <person name="Ohara O."/>
            <person name="Koga H."/>
        </authorList>
    </citation>
    <scope>NUCLEOTIDE SEQUENCE [LARGE SCALE MRNA]</scope>
    <source>
        <tissue>Brain</tissue>
    </source>
</reference>
<reference key="2">
    <citation type="journal article" date="2009" name="PLoS Biol.">
        <title>Lineage-specific biology revealed by a finished genome assembly of the mouse.</title>
        <authorList>
            <person name="Church D.M."/>
            <person name="Goodstadt L."/>
            <person name="Hillier L.W."/>
            <person name="Zody M.C."/>
            <person name="Goldstein S."/>
            <person name="She X."/>
            <person name="Bult C.J."/>
            <person name="Agarwala R."/>
            <person name="Cherry J.L."/>
            <person name="DiCuccio M."/>
            <person name="Hlavina W."/>
            <person name="Kapustin Y."/>
            <person name="Meric P."/>
            <person name="Maglott D."/>
            <person name="Birtle Z."/>
            <person name="Marques A.C."/>
            <person name="Graves T."/>
            <person name="Zhou S."/>
            <person name="Teague B."/>
            <person name="Potamousis K."/>
            <person name="Churas C."/>
            <person name="Place M."/>
            <person name="Herschleb J."/>
            <person name="Runnheim R."/>
            <person name="Forrest D."/>
            <person name="Amos-Landgraf J."/>
            <person name="Schwartz D.C."/>
            <person name="Cheng Z."/>
            <person name="Lindblad-Toh K."/>
            <person name="Eichler E.E."/>
            <person name="Ponting C.P."/>
        </authorList>
    </citation>
    <scope>NUCLEOTIDE SEQUENCE [LARGE SCALE GENOMIC DNA]</scope>
    <source>
        <strain>C57BL/6J</strain>
    </source>
</reference>
<reference key="3">
    <citation type="journal article" date="2004" name="Genome Res.">
        <title>The status, quality, and expansion of the NIH full-length cDNA project: the Mammalian Gene Collection (MGC).</title>
        <authorList>
            <consortium name="The MGC Project Team"/>
        </authorList>
    </citation>
    <scope>NUCLEOTIDE SEQUENCE [LARGE SCALE MRNA]</scope>
</reference>
<reference key="4">
    <citation type="journal article" date="2006" name="Hum. Mol. Genet.">
        <title>The chromosome 6p22 haplotype associated with dyslexia reduces the expression of KIAA0319, a novel gene involved in neuronal migration.</title>
        <authorList>
            <person name="Paracchini S."/>
            <person name="Thomas A."/>
            <person name="Castro S."/>
            <person name="Lai C."/>
            <person name="Paramasivam M."/>
            <person name="Wang Y."/>
            <person name="Keating B.J."/>
            <person name="Taylor J.M."/>
            <person name="Hacking D.F."/>
            <person name="Scerri T."/>
            <person name="Francks C."/>
            <person name="Richardson A.J."/>
            <person name="Wade-Martins R."/>
            <person name="Stein J.F."/>
            <person name="Knight J.C."/>
            <person name="Copp A.J."/>
            <person name="Loturco J."/>
            <person name="Monaco A.P."/>
        </authorList>
    </citation>
    <scope>DEVELOPMENTAL STAGE</scope>
</reference>
<reference key="5">
    <citation type="journal article" date="2010" name="Cell">
        <title>A tissue-specific atlas of mouse protein phosphorylation and expression.</title>
        <authorList>
            <person name="Huttlin E.L."/>
            <person name="Jedrychowski M.P."/>
            <person name="Elias J.E."/>
            <person name="Goswami T."/>
            <person name="Rad R."/>
            <person name="Beausoleil S.A."/>
            <person name="Villen J."/>
            <person name="Haas W."/>
            <person name="Sowa M.E."/>
            <person name="Gygi S.P."/>
        </authorList>
    </citation>
    <scope>PHOSPHORYLATION [LARGE SCALE ANALYSIS] AT SER-1009</scope>
    <scope>IDENTIFICATION BY MASS SPECTROMETRY [LARGE SCALE ANALYSIS]</scope>
    <source>
        <tissue>Brain</tissue>
    </source>
</reference>
<keyword id="KW-1003">Cell membrane</keyword>
<keyword id="KW-0217">Developmental protein</keyword>
<keyword id="KW-0967">Endosome</keyword>
<keyword id="KW-0325">Glycoprotein</keyword>
<keyword id="KW-0472">Membrane</keyword>
<keyword id="KW-0524">Neurogenesis</keyword>
<keyword id="KW-0597">Phosphoprotein</keyword>
<keyword id="KW-1185">Reference proteome</keyword>
<keyword id="KW-0677">Repeat</keyword>
<keyword id="KW-0732">Signal</keyword>
<keyword id="KW-0812">Transmembrane</keyword>
<keyword id="KW-1133">Transmembrane helix</keyword>